<evidence type="ECO:0000255" key="1">
    <source>
        <dbReference type="HAMAP-Rule" id="MF_01342"/>
    </source>
</evidence>
<evidence type="ECO:0000305" key="2"/>
<sequence>MLQPKRTKFRKVHKGRNTGLAHRGSTVSFGSIAIKATERGRMTARQIEAARRTISRRIKRGGKIFIRVFPDKPITEKPLEVRMGNGKGNVEYWVCEIKPGKILYEIEGVNEDLAREAFALAAAKLPFKTTIVTRTVM</sequence>
<protein>
    <recommendedName>
        <fullName evidence="1">Large ribosomal subunit protein uL16</fullName>
    </recommendedName>
    <alternativeName>
        <fullName evidence="2">50S ribosomal protein L16</fullName>
    </alternativeName>
</protein>
<reference key="1">
    <citation type="journal article" date="2007" name="Genes Dev.">
        <title>New insights into Acinetobacter baumannii pathogenesis revealed by high-density pyrosequencing and transposon mutagenesis.</title>
        <authorList>
            <person name="Smith M.G."/>
            <person name="Gianoulis T.A."/>
            <person name="Pukatzki S."/>
            <person name="Mekalanos J.J."/>
            <person name="Ornston L.N."/>
            <person name="Gerstein M."/>
            <person name="Snyder M."/>
        </authorList>
    </citation>
    <scope>NUCLEOTIDE SEQUENCE [LARGE SCALE GENOMIC DNA]</scope>
    <source>
        <strain>ATCC 17978 / DSM 105126 / CIP 53.77 / LMG 1025 / NCDC KC755 / 5377</strain>
    </source>
</reference>
<dbReference type="EMBL" id="CP000521">
    <property type="protein sequence ID" value="ABO13471.2"/>
    <property type="molecule type" value="Genomic_DNA"/>
</dbReference>
<dbReference type="RefSeq" id="WP_000941215.1">
    <property type="nucleotide sequence ID" value="NZ_CP053098.1"/>
</dbReference>
<dbReference type="SMR" id="A3M977"/>
<dbReference type="GeneID" id="92895310"/>
<dbReference type="KEGG" id="acb:A1S_3074"/>
<dbReference type="HOGENOM" id="CLU_078858_2_1_6"/>
<dbReference type="GO" id="GO:0022625">
    <property type="term" value="C:cytosolic large ribosomal subunit"/>
    <property type="evidence" value="ECO:0007669"/>
    <property type="project" value="TreeGrafter"/>
</dbReference>
<dbReference type="GO" id="GO:0019843">
    <property type="term" value="F:rRNA binding"/>
    <property type="evidence" value="ECO:0007669"/>
    <property type="project" value="UniProtKB-UniRule"/>
</dbReference>
<dbReference type="GO" id="GO:0003735">
    <property type="term" value="F:structural constituent of ribosome"/>
    <property type="evidence" value="ECO:0007669"/>
    <property type="project" value="InterPro"/>
</dbReference>
<dbReference type="GO" id="GO:0000049">
    <property type="term" value="F:tRNA binding"/>
    <property type="evidence" value="ECO:0007669"/>
    <property type="project" value="UniProtKB-KW"/>
</dbReference>
<dbReference type="GO" id="GO:0006412">
    <property type="term" value="P:translation"/>
    <property type="evidence" value="ECO:0007669"/>
    <property type="project" value="UniProtKB-UniRule"/>
</dbReference>
<dbReference type="CDD" id="cd01433">
    <property type="entry name" value="Ribosomal_L16_L10e"/>
    <property type="match status" value="1"/>
</dbReference>
<dbReference type="FunFam" id="3.90.1170.10:FF:000001">
    <property type="entry name" value="50S ribosomal protein L16"/>
    <property type="match status" value="1"/>
</dbReference>
<dbReference type="Gene3D" id="3.90.1170.10">
    <property type="entry name" value="Ribosomal protein L10e/L16"/>
    <property type="match status" value="1"/>
</dbReference>
<dbReference type="HAMAP" id="MF_01342">
    <property type="entry name" value="Ribosomal_uL16"/>
    <property type="match status" value="1"/>
</dbReference>
<dbReference type="InterPro" id="IPR047873">
    <property type="entry name" value="Ribosomal_uL16"/>
</dbReference>
<dbReference type="InterPro" id="IPR000114">
    <property type="entry name" value="Ribosomal_uL16_bact-type"/>
</dbReference>
<dbReference type="InterPro" id="IPR020798">
    <property type="entry name" value="Ribosomal_uL16_CS"/>
</dbReference>
<dbReference type="InterPro" id="IPR016180">
    <property type="entry name" value="Ribosomal_uL16_dom"/>
</dbReference>
<dbReference type="InterPro" id="IPR036920">
    <property type="entry name" value="Ribosomal_uL16_sf"/>
</dbReference>
<dbReference type="NCBIfam" id="TIGR01164">
    <property type="entry name" value="rplP_bact"/>
    <property type="match status" value="1"/>
</dbReference>
<dbReference type="PANTHER" id="PTHR12220">
    <property type="entry name" value="50S/60S RIBOSOMAL PROTEIN L16"/>
    <property type="match status" value="1"/>
</dbReference>
<dbReference type="PANTHER" id="PTHR12220:SF13">
    <property type="entry name" value="LARGE RIBOSOMAL SUBUNIT PROTEIN UL16M"/>
    <property type="match status" value="1"/>
</dbReference>
<dbReference type="Pfam" id="PF00252">
    <property type="entry name" value="Ribosomal_L16"/>
    <property type="match status" value="1"/>
</dbReference>
<dbReference type="PRINTS" id="PR00060">
    <property type="entry name" value="RIBOSOMALL16"/>
</dbReference>
<dbReference type="SUPFAM" id="SSF54686">
    <property type="entry name" value="Ribosomal protein L16p/L10e"/>
    <property type="match status" value="1"/>
</dbReference>
<dbReference type="PROSITE" id="PS00701">
    <property type="entry name" value="RIBOSOMAL_L16_2"/>
    <property type="match status" value="1"/>
</dbReference>
<gene>
    <name evidence="1" type="primary">rplP</name>
    <name type="ordered locus">A1S_3074</name>
</gene>
<keyword id="KW-0687">Ribonucleoprotein</keyword>
<keyword id="KW-0689">Ribosomal protein</keyword>
<keyword id="KW-0694">RNA-binding</keyword>
<keyword id="KW-0699">rRNA-binding</keyword>
<keyword id="KW-0820">tRNA-binding</keyword>
<accession>A3M977</accession>
<name>RL16_ACIBT</name>
<organism>
    <name type="scientific">Acinetobacter baumannii (strain ATCC 17978 / DSM 105126 / CIP 53.77 / LMG 1025 / NCDC KC755 / 5377)</name>
    <dbReference type="NCBI Taxonomy" id="400667"/>
    <lineage>
        <taxon>Bacteria</taxon>
        <taxon>Pseudomonadati</taxon>
        <taxon>Pseudomonadota</taxon>
        <taxon>Gammaproteobacteria</taxon>
        <taxon>Moraxellales</taxon>
        <taxon>Moraxellaceae</taxon>
        <taxon>Acinetobacter</taxon>
        <taxon>Acinetobacter calcoaceticus/baumannii complex</taxon>
    </lineage>
</organism>
<comment type="function">
    <text evidence="1">Binds 23S rRNA and is also seen to make contacts with the A and possibly P site tRNAs.</text>
</comment>
<comment type="subunit">
    <text evidence="1">Part of the 50S ribosomal subunit.</text>
</comment>
<comment type="similarity">
    <text evidence="1">Belongs to the universal ribosomal protein uL16 family.</text>
</comment>
<proteinExistence type="inferred from homology"/>
<feature type="chain" id="PRO_1000142910" description="Large ribosomal subunit protein uL16">
    <location>
        <begin position="1"/>
        <end position="137"/>
    </location>
</feature>